<proteinExistence type="inferred from homology"/>
<comment type="function">
    <text evidence="1">Part of the Sec protein translocase complex. Interacts with the SecYEG preprotein conducting channel. Has a central role in coupling the hydrolysis of ATP to the transfer of proteins into and across the cell membrane, serving both as a receptor for the preprotein-SecB complex and as an ATP-driven molecular motor driving the stepwise translocation of polypeptide chains across the membrane.</text>
</comment>
<comment type="catalytic activity">
    <reaction evidence="1">
        <text>ATP + H2O + cellular proteinSide 1 = ADP + phosphate + cellular proteinSide 2.</text>
        <dbReference type="EC" id="7.4.2.8"/>
    </reaction>
</comment>
<comment type="cofactor">
    <cofactor evidence="1">
        <name>Zn(2+)</name>
        <dbReference type="ChEBI" id="CHEBI:29105"/>
    </cofactor>
    <text evidence="1">May bind 1 zinc ion per subunit.</text>
</comment>
<comment type="subunit">
    <text evidence="1">Monomer and homodimer. Part of the essential Sec protein translocation apparatus which comprises SecA, SecYEG and auxiliary proteins SecDF-YajC and YidC.</text>
</comment>
<comment type="subcellular location">
    <subcellularLocation>
        <location evidence="1">Cell inner membrane</location>
        <topology evidence="1">Peripheral membrane protein</topology>
        <orientation evidence="1">Cytoplasmic side</orientation>
    </subcellularLocation>
    <subcellularLocation>
        <location evidence="1">Cytoplasm</location>
    </subcellularLocation>
    <text evidence="1">Distribution is 50-50.</text>
</comment>
<comment type="induction">
    <text evidence="1">Repressed under conditions of excess protein secretion capacity and derepressed when protein secretion becomes limiting. This is regulated by SecM.</text>
</comment>
<comment type="similarity">
    <text evidence="1">Belongs to the SecA family.</text>
</comment>
<accession>A7ZHI9</accession>
<evidence type="ECO:0000255" key="1">
    <source>
        <dbReference type="HAMAP-Rule" id="MF_01382"/>
    </source>
</evidence>
<evidence type="ECO:0000256" key="2">
    <source>
        <dbReference type="SAM" id="MobiDB-lite"/>
    </source>
</evidence>
<dbReference type="EC" id="7.4.2.8" evidence="1"/>
<dbReference type="EMBL" id="CP000800">
    <property type="protein sequence ID" value="ABV18541.1"/>
    <property type="molecule type" value="Genomic_DNA"/>
</dbReference>
<dbReference type="RefSeq" id="WP_000905789.1">
    <property type="nucleotide sequence ID" value="NC_009801.1"/>
</dbReference>
<dbReference type="SMR" id="A7ZHI9"/>
<dbReference type="GeneID" id="93777336"/>
<dbReference type="KEGG" id="ecw:EcE24377A_0100"/>
<dbReference type="HOGENOM" id="CLU_005314_3_0_6"/>
<dbReference type="Proteomes" id="UP000001122">
    <property type="component" value="Chromosome"/>
</dbReference>
<dbReference type="GO" id="GO:0031522">
    <property type="term" value="C:cell envelope Sec protein transport complex"/>
    <property type="evidence" value="ECO:0007669"/>
    <property type="project" value="TreeGrafter"/>
</dbReference>
<dbReference type="GO" id="GO:0005829">
    <property type="term" value="C:cytosol"/>
    <property type="evidence" value="ECO:0007669"/>
    <property type="project" value="TreeGrafter"/>
</dbReference>
<dbReference type="GO" id="GO:0005886">
    <property type="term" value="C:plasma membrane"/>
    <property type="evidence" value="ECO:0007669"/>
    <property type="project" value="UniProtKB-SubCell"/>
</dbReference>
<dbReference type="GO" id="GO:0005524">
    <property type="term" value="F:ATP binding"/>
    <property type="evidence" value="ECO:0007669"/>
    <property type="project" value="UniProtKB-UniRule"/>
</dbReference>
<dbReference type="GO" id="GO:0046872">
    <property type="term" value="F:metal ion binding"/>
    <property type="evidence" value="ECO:0007669"/>
    <property type="project" value="UniProtKB-KW"/>
</dbReference>
<dbReference type="GO" id="GO:0008564">
    <property type="term" value="F:protein-exporting ATPase activity"/>
    <property type="evidence" value="ECO:0007669"/>
    <property type="project" value="UniProtKB-EC"/>
</dbReference>
<dbReference type="GO" id="GO:0065002">
    <property type="term" value="P:intracellular protein transmembrane transport"/>
    <property type="evidence" value="ECO:0007669"/>
    <property type="project" value="UniProtKB-UniRule"/>
</dbReference>
<dbReference type="GO" id="GO:0017038">
    <property type="term" value="P:protein import"/>
    <property type="evidence" value="ECO:0007669"/>
    <property type="project" value="InterPro"/>
</dbReference>
<dbReference type="GO" id="GO:0006605">
    <property type="term" value="P:protein targeting"/>
    <property type="evidence" value="ECO:0007669"/>
    <property type="project" value="UniProtKB-UniRule"/>
</dbReference>
<dbReference type="GO" id="GO:0043952">
    <property type="term" value="P:protein transport by the Sec complex"/>
    <property type="evidence" value="ECO:0007669"/>
    <property type="project" value="TreeGrafter"/>
</dbReference>
<dbReference type="CDD" id="cd17928">
    <property type="entry name" value="DEXDc_SecA"/>
    <property type="match status" value="1"/>
</dbReference>
<dbReference type="CDD" id="cd18803">
    <property type="entry name" value="SF2_C_secA"/>
    <property type="match status" value="1"/>
</dbReference>
<dbReference type="FunFam" id="1.10.3060.10:FF:000001">
    <property type="entry name" value="Preprotein translocase subunit SecA"/>
    <property type="match status" value="1"/>
</dbReference>
<dbReference type="FunFam" id="3.40.50.300:FF:000081">
    <property type="entry name" value="Preprotein translocase subunit SecA"/>
    <property type="match status" value="1"/>
</dbReference>
<dbReference type="FunFam" id="3.40.50.300:FF:000113">
    <property type="entry name" value="Preprotein translocase subunit SecA"/>
    <property type="match status" value="1"/>
</dbReference>
<dbReference type="FunFam" id="3.90.1440.10:FF:000001">
    <property type="entry name" value="Preprotein translocase subunit SecA"/>
    <property type="match status" value="1"/>
</dbReference>
<dbReference type="Gene3D" id="1.10.3060.10">
    <property type="entry name" value="Helical scaffold and wing domains of SecA"/>
    <property type="match status" value="1"/>
</dbReference>
<dbReference type="Gene3D" id="3.40.50.300">
    <property type="entry name" value="P-loop containing nucleotide triphosphate hydrolases"/>
    <property type="match status" value="2"/>
</dbReference>
<dbReference type="Gene3D" id="3.90.1440.10">
    <property type="entry name" value="SecA, preprotein cross-linking domain"/>
    <property type="match status" value="1"/>
</dbReference>
<dbReference type="HAMAP" id="MF_01382">
    <property type="entry name" value="SecA"/>
    <property type="match status" value="1"/>
</dbReference>
<dbReference type="InterPro" id="IPR014001">
    <property type="entry name" value="Helicase_ATP-bd"/>
</dbReference>
<dbReference type="InterPro" id="IPR001650">
    <property type="entry name" value="Helicase_C-like"/>
</dbReference>
<dbReference type="InterPro" id="IPR027417">
    <property type="entry name" value="P-loop_NTPase"/>
</dbReference>
<dbReference type="InterPro" id="IPR004027">
    <property type="entry name" value="SEC_C_motif"/>
</dbReference>
<dbReference type="InterPro" id="IPR000185">
    <property type="entry name" value="SecA"/>
</dbReference>
<dbReference type="InterPro" id="IPR020937">
    <property type="entry name" value="SecA_CS"/>
</dbReference>
<dbReference type="InterPro" id="IPR011115">
    <property type="entry name" value="SecA_DEAD"/>
</dbReference>
<dbReference type="InterPro" id="IPR014018">
    <property type="entry name" value="SecA_motor_DEAD"/>
</dbReference>
<dbReference type="InterPro" id="IPR011130">
    <property type="entry name" value="SecA_preprotein_X-link_dom"/>
</dbReference>
<dbReference type="InterPro" id="IPR044722">
    <property type="entry name" value="SecA_SF2_C"/>
</dbReference>
<dbReference type="InterPro" id="IPR011116">
    <property type="entry name" value="SecA_Wing/Scaffold"/>
</dbReference>
<dbReference type="InterPro" id="IPR036266">
    <property type="entry name" value="SecA_Wing/Scaffold_sf"/>
</dbReference>
<dbReference type="InterPro" id="IPR036670">
    <property type="entry name" value="SecA_X-link_sf"/>
</dbReference>
<dbReference type="NCBIfam" id="NF009538">
    <property type="entry name" value="PRK12904.1"/>
    <property type="match status" value="1"/>
</dbReference>
<dbReference type="NCBIfam" id="TIGR00963">
    <property type="entry name" value="secA"/>
    <property type="match status" value="1"/>
</dbReference>
<dbReference type="PANTHER" id="PTHR30612:SF0">
    <property type="entry name" value="CHLOROPLAST PROTEIN-TRANSPORTING ATPASE"/>
    <property type="match status" value="1"/>
</dbReference>
<dbReference type="PANTHER" id="PTHR30612">
    <property type="entry name" value="SECA INNER MEMBRANE COMPONENT OF SEC PROTEIN SECRETION SYSTEM"/>
    <property type="match status" value="1"/>
</dbReference>
<dbReference type="Pfam" id="PF21090">
    <property type="entry name" value="P-loop_SecA"/>
    <property type="match status" value="1"/>
</dbReference>
<dbReference type="Pfam" id="PF02810">
    <property type="entry name" value="SEC-C"/>
    <property type="match status" value="1"/>
</dbReference>
<dbReference type="Pfam" id="PF07517">
    <property type="entry name" value="SecA_DEAD"/>
    <property type="match status" value="1"/>
</dbReference>
<dbReference type="Pfam" id="PF01043">
    <property type="entry name" value="SecA_PP_bind"/>
    <property type="match status" value="1"/>
</dbReference>
<dbReference type="Pfam" id="PF07516">
    <property type="entry name" value="SecA_SW"/>
    <property type="match status" value="1"/>
</dbReference>
<dbReference type="PRINTS" id="PR00906">
    <property type="entry name" value="SECA"/>
</dbReference>
<dbReference type="SMART" id="SM00957">
    <property type="entry name" value="SecA_DEAD"/>
    <property type="match status" value="1"/>
</dbReference>
<dbReference type="SMART" id="SM00958">
    <property type="entry name" value="SecA_PP_bind"/>
    <property type="match status" value="1"/>
</dbReference>
<dbReference type="SUPFAM" id="SSF81886">
    <property type="entry name" value="Helical scaffold and wing domains of SecA"/>
    <property type="match status" value="1"/>
</dbReference>
<dbReference type="SUPFAM" id="SSF52540">
    <property type="entry name" value="P-loop containing nucleoside triphosphate hydrolases"/>
    <property type="match status" value="2"/>
</dbReference>
<dbReference type="SUPFAM" id="SSF81767">
    <property type="entry name" value="Pre-protein crosslinking domain of SecA"/>
    <property type="match status" value="1"/>
</dbReference>
<dbReference type="PROSITE" id="PS01312">
    <property type="entry name" value="SECA"/>
    <property type="match status" value="1"/>
</dbReference>
<dbReference type="PROSITE" id="PS51196">
    <property type="entry name" value="SECA_MOTOR_DEAD"/>
    <property type="match status" value="1"/>
</dbReference>
<name>SECA_ECO24</name>
<sequence>MLIKLLTKVFGSRNDRTLRRMRKVVNIINAMEPEMEKLSDEELKGKTAEFRARLEKGEVLENLIPEAFAVVREASKRVFGMRHFDVQLLGGMVLNERCIAEMRTGEGKTLTATLPAYLNALTGKGVHVVTVNDYLAQRDAENNRPLFEFLGLTVGINLPGMPAPAKREAYAADITYGTNNEYGFDYLRDNMAFSPEERVQRKLHYALVDEVDSILIDEARTPLIISGPAEDSSEMYKRVNKIIPHLIRQEKEDSETFQGEGHFSVDEKSRQVNLTERGLVLIEELLVKEGIMDEGESLYSPANIMLMHHVTAALRAHALFTRDVDYIVKDGEVIIVDEHTGRTMQGRRWSDGLHQAVEAKEGVQIQNENQTLASITFQNYFRLYEKLAGMTGTADTEAFEFSSIYKLDTVVVPTNRPMIRKDLPDLVYMTEAEKIQAIIEDIKERTAKGQPVLVGTISIEKSELVSNELTKAGIKHNVLNAKFHANEAAIVAQAGYPAAVTIATNMAGRGTDIVLGGSWQAEVAALENPTAEQIEKIKADWQVRHDAVLEAGGLHIIGTERHESRRIDNQLRGRSGRQGDAGSSRFYLSMEDALMRIFASDRVSGMMRKLGMKPGEAIEHPWVTKAIANAQRKVESRNFDIRKQLLEYDDVANDQRRAIYSQRNELLDVSDVSETINSIREDVFKATIDAYIPPQSLEEMWDIPGLQERLKNDFDLDLPIAEWLDKEPELHEETLRERILAQSIEVYQRKEEVVGAEMMRHFEKGVMLQTLDSLWKEHLAAMDYLRQGIHLRGYAQKDPKQEYKRESFSMFAAMLESLKYEVISTLSKVQVRMPEEVEELEQQRRMEAERLAQMQQLSHQDDDSAAAAALAAQTGERKVGRNDPCPCGSGKKYKQCHGRLQ</sequence>
<reference key="1">
    <citation type="journal article" date="2008" name="J. Bacteriol.">
        <title>The pangenome structure of Escherichia coli: comparative genomic analysis of E. coli commensal and pathogenic isolates.</title>
        <authorList>
            <person name="Rasko D.A."/>
            <person name="Rosovitz M.J."/>
            <person name="Myers G.S.A."/>
            <person name="Mongodin E.F."/>
            <person name="Fricke W.F."/>
            <person name="Gajer P."/>
            <person name="Crabtree J."/>
            <person name="Sebaihia M."/>
            <person name="Thomson N.R."/>
            <person name="Chaudhuri R."/>
            <person name="Henderson I.R."/>
            <person name="Sperandio V."/>
            <person name="Ravel J."/>
        </authorList>
    </citation>
    <scope>NUCLEOTIDE SEQUENCE [LARGE SCALE GENOMIC DNA]</scope>
    <source>
        <strain>E24377A / ETEC</strain>
    </source>
</reference>
<gene>
    <name evidence="1" type="primary">secA</name>
    <name type="ordered locus">EcE24377A_0100</name>
</gene>
<organism>
    <name type="scientific">Escherichia coli O139:H28 (strain E24377A / ETEC)</name>
    <dbReference type="NCBI Taxonomy" id="331111"/>
    <lineage>
        <taxon>Bacteria</taxon>
        <taxon>Pseudomonadati</taxon>
        <taxon>Pseudomonadota</taxon>
        <taxon>Gammaproteobacteria</taxon>
        <taxon>Enterobacterales</taxon>
        <taxon>Enterobacteriaceae</taxon>
        <taxon>Escherichia</taxon>
    </lineage>
</organism>
<keyword id="KW-0067">ATP-binding</keyword>
<keyword id="KW-0997">Cell inner membrane</keyword>
<keyword id="KW-1003">Cell membrane</keyword>
<keyword id="KW-0963">Cytoplasm</keyword>
<keyword id="KW-0472">Membrane</keyword>
<keyword id="KW-0479">Metal-binding</keyword>
<keyword id="KW-0547">Nucleotide-binding</keyword>
<keyword id="KW-0653">Protein transport</keyword>
<keyword id="KW-1185">Reference proteome</keyword>
<keyword id="KW-1278">Translocase</keyword>
<keyword id="KW-0811">Translocation</keyword>
<keyword id="KW-0813">Transport</keyword>
<keyword id="KW-0862">Zinc</keyword>
<protein>
    <recommendedName>
        <fullName evidence="1">Protein translocase subunit SecA</fullName>
        <ecNumber evidence="1">7.4.2.8</ecNumber>
    </recommendedName>
</protein>
<feature type="chain" id="PRO_0000320805" description="Protein translocase subunit SecA">
    <location>
        <begin position="1"/>
        <end position="901"/>
    </location>
</feature>
<feature type="region of interest" description="Disordered" evidence="2">
    <location>
        <begin position="859"/>
        <end position="901"/>
    </location>
</feature>
<feature type="compositionally biased region" description="Basic residues" evidence="2">
    <location>
        <begin position="891"/>
        <end position="901"/>
    </location>
</feature>
<feature type="binding site" evidence="1">
    <location>
        <position position="87"/>
    </location>
    <ligand>
        <name>ATP</name>
        <dbReference type="ChEBI" id="CHEBI:30616"/>
    </ligand>
</feature>
<feature type="binding site" evidence="1">
    <location>
        <begin position="105"/>
        <end position="109"/>
    </location>
    <ligand>
        <name>ATP</name>
        <dbReference type="ChEBI" id="CHEBI:30616"/>
    </ligand>
</feature>
<feature type="binding site" evidence="1">
    <location>
        <position position="512"/>
    </location>
    <ligand>
        <name>ATP</name>
        <dbReference type="ChEBI" id="CHEBI:30616"/>
    </ligand>
</feature>
<feature type="binding site" evidence="1">
    <location>
        <position position="885"/>
    </location>
    <ligand>
        <name>Zn(2+)</name>
        <dbReference type="ChEBI" id="CHEBI:29105"/>
    </ligand>
</feature>
<feature type="binding site" evidence="1">
    <location>
        <position position="887"/>
    </location>
    <ligand>
        <name>Zn(2+)</name>
        <dbReference type="ChEBI" id="CHEBI:29105"/>
    </ligand>
</feature>
<feature type="binding site" evidence="1">
    <location>
        <position position="896"/>
    </location>
    <ligand>
        <name>Zn(2+)</name>
        <dbReference type="ChEBI" id="CHEBI:29105"/>
    </ligand>
</feature>
<feature type="binding site" evidence="1">
    <location>
        <position position="897"/>
    </location>
    <ligand>
        <name>Zn(2+)</name>
        <dbReference type="ChEBI" id="CHEBI:29105"/>
    </ligand>
</feature>